<feature type="chain" id="PRO_1000025680" description="Protein Smg homolog">
    <location>
        <begin position="1"/>
        <end position="157"/>
    </location>
</feature>
<reference key="1">
    <citation type="journal article" date="2005" name="Genome Res.">
        <title>Comparative and functional genomic analyses of the pathogenicity of phytopathogen Xanthomonas campestris pv. campestris.</title>
        <authorList>
            <person name="Qian W."/>
            <person name="Jia Y."/>
            <person name="Ren S.-X."/>
            <person name="He Y.-Q."/>
            <person name="Feng J.-X."/>
            <person name="Lu L.-F."/>
            <person name="Sun Q."/>
            <person name="Ying G."/>
            <person name="Tang D.-J."/>
            <person name="Tang H."/>
            <person name="Wu W."/>
            <person name="Hao P."/>
            <person name="Wang L."/>
            <person name="Jiang B.-L."/>
            <person name="Zeng S."/>
            <person name="Gu W.-Y."/>
            <person name="Lu G."/>
            <person name="Rong L."/>
            <person name="Tian Y."/>
            <person name="Yao Z."/>
            <person name="Fu G."/>
            <person name="Chen B."/>
            <person name="Fang R."/>
            <person name="Qiang B."/>
            <person name="Chen Z."/>
            <person name="Zhao G.-P."/>
            <person name="Tang J.-L."/>
            <person name="He C."/>
        </authorList>
    </citation>
    <scope>NUCLEOTIDE SEQUENCE [LARGE SCALE GENOMIC DNA]</scope>
    <source>
        <strain>8004</strain>
    </source>
</reference>
<name>SMG_XANC8</name>
<sequence length="157" mass="18113">MKESILDVLLYLFEHYFSEDADLVRDRDSLQNGLIQAGFSPAEISKAFDWLDALAEQRPSVARPHVDGPVRIYHGPELDKLDVDCRGFLLFLEQHRILDADQRELVLDRAMALDQDELDLDDLKWVVLMVLFNQPGAEAAYAWMETQMFLDEPEPVH</sequence>
<dbReference type="EMBL" id="CP000050">
    <property type="protein sequence ID" value="AAY50862.1"/>
    <property type="molecule type" value="Genomic_DNA"/>
</dbReference>
<dbReference type="RefSeq" id="WP_011038834.1">
    <property type="nucleotide sequence ID" value="NZ_CP155948.1"/>
</dbReference>
<dbReference type="SMR" id="Q4UQ11"/>
<dbReference type="KEGG" id="xcb:XC_3822"/>
<dbReference type="HOGENOM" id="CLU_133242_0_0_6"/>
<dbReference type="Proteomes" id="UP000000420">
    <property type="component" value="Chromosome"/>
</dbReference>
<dbReference type="HAMAP" id="MF_00598">
    <property type="entry name" value="Smg"/>
    <property type="match status" value="1"/>
</dbReference>
<dbReference type="InterPro" id="IPR007456">
    <property type="entry name" value="Smg"/>
</dbReference>
<dbReference type="NCBIfam" id="NF002897">
    <property type="entry name" value="PRK03430.1"/>
    <property type="match status" value="1"/>
</dbReference>
<dbReference type="PANTHER" id="PTHR38692">
    <property type="entry name" value="PROTEIN SMG"/>
    <property type="match status" value="1"/>
</dbReference>
<dbReference type="PANTHER" id="PTHR38692:SF1">
    <property type="entry name" value="PROTEIN SMG"/>
    <property type="match status" value="1"/>
</dbReference>
<dbReference type="Pfam" id="PF04361">
    <property type="entry name" value="DUF494"/>
    <property type="match status" value="1"/>
</dbReference>
<gene>
    <name evidence="1" type="primary">smg</name>
    <name type="ordered locus">XC_3822</name>
</gene>
<protein>
    <recommendedName>
        <fullName evidence="1">Protein Smg homolog</fullName>
    </recommendedName>
</protein>
<organism>
    <name type="scientific">Xanthomonas campestris pv. campestris (strain 8004)</name>
    <dbReference type="NCBI Taxonomy" id="314565"/>
    <lineage>
        <taxon>Bacteria</taxon>
        <taxon>Pseudomonadati</taxon>
        <taxon>Pseudomonadota</taxon>
        <taxon>Gammaproteobacteria</taxon>
        <taxon>Lysobacterales</taxon>
        <taxon>Lysobacteraceae</taxon>
        <taxon>Xanthomonas</taxon>
    </lineage>
</organism>
<evidence type="ECO:0000255" key="1">
    <source>
        <dbReference type="HAMAP-Rule" id="MF_00598"/>
    </source>
</evidence>
<comment type="similarity">
    <text evidence="1">Belongs to the Smg family.</text>
</comment>
<accession>Q4UQ11</accession>
<proteinExistence type="inferred from homology"/>